<gene>
    <name evidence="1" type="primary">dapD</name>
    <name type="ordered locus">MCA1490</name>
</gene>
<name>DAPD_METCA</name>
<protein>
    <recommendedName>
        <fullName evidence="1">2,3,4,5-tetrahydropyridine-2,6-dicarboxylate N-succinyltransferase</fullName>
        <ecNumber evidence="1">2.3.1.117</ecNumber>
    </recommendedName>
    <alternativeName>
        <fullName evidence="1">Tetrahydrodipicolinate N-succinyltransferase</fullName>
        <shortName evidence="1">THDP succinyltransferase</shortName>
        <shortName evidence="1">THP succinyltransferase</shortName>
        <shortName evidence="1">Tetrahydropicolinate succinylase</shortName>
    </alternativeName>
</protein>
<reference key="1">
    <citation type="journal article" date="2004" name="PLoS Biol.">
        <title>Genomic insights into methanotrophy: the complete genome sequence of Methylococcus capsulatus (Bath).</title>
        <authorList>
            <person name="Ward N.L."/>
            <person name="Larsen O."/>
            <person name="Sakwa J."/>
            <person name="Bruseth L."/>
            <person name="Khouri H.M."/>
            <person name="Durkin A.S."/>
            <person name="Dimitrov G."/>
            <person name="Jiang L."/>
            <person name="Scanlan D."/>
            <person name="Kang K.H."/>
            <person name="Lewis M.R."/>
            <person name="Nelson K.E."/>
            <person name="Methe B.A."/>
            <person name="Wu M."/>
            <person name="Heidelberg J.F."/>
            <person name="Paulsen I.T."/>
            <person name="Fouts D.E."/>
            <person name="Ravel J."/>
            <person name="Tettelin H."/>
            <person name="Ren Q."/>
            <person name="Read T.D."/>
            <person name="DeBoy R.T."/>
            <person name="Seshadri R."/>
            <person name="Salzberg S.L."/>
            <person name="Jensen H.B."/>
            <person name="Birkeland N.K."/>
            <person name="Nelson W.C."/>
            <person name="Dodson R.J."/>
            <person name="Grindhaug S.H."/>
            <person name="Holt I.E."/>
            <person name="Eidhammer I."/>
            <person name="Jonasen I."/>
            <person name="Vanaken S."/>
            <person name="Utterback T.R."/>
            <person name="Feldblyum T.V."/>
            <person name="Fraser C.M."/>
            <person name="Lillehaug J.R."/>
            <person name="Eisen J.A."/>
        </authorList>
    </citation>
    <scope>NUCLEOTIDE SEQUENCE [LARGE SCALE GENOMIC DNA]</scope>
    <source>
        <strain>ATCC 33009 / NCIMB 11132 / Bath</strain>
    </source>
</reference>
<evidence type="ECO:0000255" key="1">
    <source>
        <dbReference type="HAMAP-Rule" id="MF_00811"/>
    </source>
</evidence>
<keyword id="KW-0012">Acyltransferase</keyword>
<keyword id="KW-0028">Amino-acid biosynthesis</keyword>
<keyword id="KW-0963">Cytoplasm</keyword>
<keyword id="KW-0220">Diaminopimelate biosynthesis</keyword>
<keyword id="KW-0457">Lysine biosynthesis</keyword>
<keyword id="KW-1185">Reference proteome</keyword>
<keyword id="KW-0677">Repeat</keyword>
<keyword id="KW-0808">Transferase</keyword>
<accession>Q608K0</accession>
<sequence length="271" mass="28841">MSLENIINEAFENRAQISPGTVGAEVREAVAEALRLLDSGAARVAEKKDGGWVVNQWLKKAVLLSFRINDNRVMDGGETRYFDKVEPKFGGFGPEEFRAAGVRVVPPAAVRRGAYIAPGVILMPSYVNIGAYVDSGTMVDTWATVGSCAQIGKNVHLSGGVGIGGVLEPLQAGPTIIEDNCFIGARSEIVEGVIVEEGSVISMGVYIGQSTKIYNRMTGEISYGRVPAGSVVVSGNLPARDGSHSLYCAVIIKQVDEKTRGKVGINELLRD</sequence>
<feature type="chain" id="PRO_0000196948" description="2,3,4,5-tetrahydropyridine-2,6-dicarboxylate N-succinyltransferase">
    <location>
        <begin position="1"/>
        <end position="271"/>
    </location>
</feature>
<feature type="binding site" evidence="1">
    <location>
        <position position="103"/>
    </location>
    <ligand>
        <name>substrate</name>
    </ligand>
</feature>
<feature type="binding site" evidence="1">
    <location>
        <position position="140"/>
    </location>
    <ligand>
        <name>substrate</name>
    </ligand>
</feature>
<organism>
    <name type="scientific">Methylococcus capsulatus (strain ATCC 33009 / NCIMB 11132 / Bath)</name>
    <dbReference type="NCBI Taxonomy" id="243233"/>
    <lineage>
        <taxon>Bacteria</taxon>
        <taxon>Pseudomonadati</taxon>
        <taxon>Pseudomonadota</taxon>
        <taxon>Gammaproteobacteria</taxon>
        <taxon>Methylococcales</taxon>
        <taxon>Methylococcaceae</taxon>
        <taxon>Methylococcus</taxon>
    </lineage>
</organism>
<comment type="catalytic activity">
    <reaction evidence="1">
        <text>(S)-2,3,4,5-tetrahydrodipicolinate + succinyl-CoA + H2O = (S)-2-succinylamino-6-oxoheptanedioate + CoA</text>
        <dbReference type="Rhea" id="RHEA:17325"/>
        <dbReference type="ChEBI" id="CHEBI:15377"/>
        <dbReference type="ChEBI" id="CHEBI:15685"/>
        <dbReference type="ChEBI" id="CHEBI:16845"/>
        <dbReference type="ChEBI" id="CHEBI:57287"/>
        <dbReference type="ChEBI" id="CHEBI:57292"/>
        <dbReference type="EC" id="2.3.1.117"/>
    </reaction>
</comment>
<comment type="pathway">
    <text evidence="1">Amino-acid biosynthesis; L-lysine biosynthesis via DAP pathway; LL-2,6-diaminopimelate from (S)-tetrahydrodipicolinate (succinylase route): step 1/3.</text>
</comment>
<comment type="subunit">
    <text evidence="1">Homotrimer.</text>
</comment>
<comment type="subcellular location">
    <subcellularLocation>
        <location evidence="1">Cytoplasm</location>
    </subcellularLocation>
</comment>
<comment type="similarity">
    <text evidence="1">Belongs to the transferase hexapeptide repeat family.</text>
</comment>
<proteinExistence type="inferred from homology"/>
<dbReference type="EC" id="2.3.1.117" evidence="1"/>
<dbReference type="EMBL" id="AE017282">
    <property type="protein sequence ID" value="AAU92477.1"/>
    <property type="molecule type" value="Genomic_DNA"/>
</dbReference>
<dbReference type="RefSeq" id="WP_010960766.1">
    <property type="nucleotide sequence ID" value="NC_002977.6"/>
</dbReference>
<dbReference type="SMR" id="Q608K0"/>
<dbReference type="STRING" id="243233.MCA1490"/>
<dbReference type="GeneID" id="88223762"/>
<dbReference type="KEGG" id="mca:MCA1490"/>
<dbReference type="eggNOG" id="COG2171">
    <property type="taxonomic scope" value="Bacteria"/>
</dbReference>
<dbReference type="HOGENOM" id="CLU_050859_0_1_6"/>
<dbReference type="UniPathway" id="UPA00034">
    <property type="reaction ID" value="UER00019"/>
</dbReference>
<dbReference type="Proteomes" id="UP000006821">
    <property type="component" value="Chromosome"/>
</dbReference>
<dbReference type="GO" id="GO:0005737">
    <property type="term" value="C:cytoplasm"/>
    <property type="evidence" value="ECO:0007669"/>
    <property type="project" value="UniProtKB-SubCell"/>
</dbReference>
<dbReference type="GO" id="GO:0008666">
    <property type="term" value="F:2,3,4,5-tetrahydropyridine-2,6-dicarboxylate N-succinyltransferase activity"/>
    <property type="evidence" value="ECO:0007669"/>
    <property type="project" value="UniProtKB-UniRule"/>
</dbReference>
<dbReference type="GO" id="GO:0016779">
    <property type="term" value="F:nucleotidyltransferase activity"/>
    <property type="evidence" value="ECO:0007669"/>
    <property type="project" value="TreeGrafter"/>
</dbReference>
<dbReference type="GO" id="GO:0019877">
    <property type="term" value="P:diaminopimelate biosynthetic process"/>
    <property type="evidence" value="ECO:0007669"/>
    <property type="project" value="UniProtKB-UniRule"/>
</dbReference>
<dbReference type="GO" id="GO:0009089">
    <property type="term" value="P:lysine biosynthetic process via diaminopimelate"/>
    <property type="evidence" value="ECO:0007669"/>
    <property type="project" value="UniProtKB-UniRule"/>
</dbReference>
<dbReference type="CDD" id="cd03350">
    <property type="entry name" value="LbH_THP_succinylT"/>
    <property type="match status" value="1"/>
</dbReference>
<dbReference type="Gene3D" id="2.160.10.10">
    <property type="entry name" value="Hexapeptide repeat proteins"/>
    <property type="match status" value="1"/>
</dbReference>
<dbReference type="Gene3D" id="1.10.166.10">
    <property type="entry name" value="Tetrahydrodipicolinate-N-succinyltransferase, N-terminal domain"/>
    <property type="match status" value="1"/>
</dbReference>
<dbReference type="HAMAP" id="MF_00811">
    <property type="entry name" value="DapD"/>
    <property type="match status" value="1"/>
</dbReference>
<dbReference type="InterPro" id="IPR005664">
    <property type="entry name" value="DapD_Trfase_Hexpep_rpt_fam"/>
</dbReference>
<dbReference type="InterPro" id="IPR001451">
    <property type="entry name" value="Hexapep"/>
</dbReference>
<dbReference type="InterPro" id="IPR018357">
    <property type="entry name" value="Hexapep_transf_CS"/>
</dbReference>
<dbReference type="InterPro" id="IPR023180">
    <property type="entry name" value="THP_succinylTrfase_dom1"/>
</dbReference>
<dbReference type="InterPro" id="IPR037133">
    <property type="entry name" value="THP_succinylTrfase_N_sf"/>
</dbReference>
<dbReference type="InterPro" id="IPR011004">
    <property type="entry name" value="Trimer_LpxA-like_sf"/>
</dbReference>
<dbReference type="NCBIfam" id="TIGR00965">
    <property type="entry name" value="dapD"/>
    <property type="match status" value="1"/>
</dbReference>
<dbReference type="NCBIfam" id="NF008808">
    <property type="entry name" value="PRK11830.1"/>
    <property type="match status" value="1"/>
</dbReference>
<dbReference type="PANTHER" id="PTHR19136:SF52">
    <property type="entry name" value="2,3,4,5-TETRAHYDROPYRIDINE-2,6-DICARBOXYLATE N-SUCCINYLTRANSFERASE"/>
    <property type="match status" value="1"/>
</dbReference>
<dbReference type="PANTHER" id="PTHR19136">
    <property type="entry name" value="MOLYBDENUM COFACTOR GUANYLYLTRANSFERASE"/>
    <property type="match status" value="1"/>
</dbReference>
<dbReference type="Pfam" id="PF14602">
    <property type="entry name" value="Hexapep_2"/>
    <property type="match status" value="1"/>
</dbReference>
<dbReference type="Pfam" id="PF14805">
    <property type="entry name" value="THDPS_N_2"/>
    <property type="match status" value="1"/>
</dbReference>
<dbReference type="SUPFAM" id="SSF51161">
    <property type="entry name" value="Trimeric LpxA-like enzymes"/>
    <property type="match status" value="1"/>
</dbReference>
<dbReference type="PROSITE" id="PS00101">
    <property type="entry name" value="HEXAPEP_TRANSFERASES"/>
    <property type="match status" value="1"/>
</dbReference>